<reference key="1">
    <citation type="journal article" date="1998" name="Nature">
        <title>Deciphering the biology of Mycobacterium tuberculosis from the complete genome sequence.</title>
        <authorList>
            <person name="Cole S.T."/>
            <person name="Brosch R."/>
            <person name="Parkhill J."/>
            <person name="Garnier T."/>
            <person name="Churcher C.M."/>
            <person name="Harris D.E."/>
            <person name="Gordon S.V."/>
            <person name="Eiglmeier K."/>
            <person name="Gas S."/>
            <person name="Barry C.E. III"/>
            <person name="Tekaia F."/>
            <person name="Badcock K."/>
            <person name="Basham D."/>
            <person name="Brown D."/>
            <person name="Chillingworth T."/>
            <person name="Connor R."/>
            <person name="Davies R.M."/>
            <person name="Devlin K."/>
            <person name="Feltwell T."/>
            <person name="Gentles S."/>
            <person name="Hamlin N."/>
            <person name="Holroyd S."/>
            <person name="Hornsby T."/>
            <person name="Jagels K."/>
            <person name="Krogh A."/>
            <person name="McLean J."/>
            <person name="Moule S."/>
            <person name="Murphy L.D."/>
            <person name="Oliver S."/>
            <person name="Osborne J."/>
            <person name="Quail M.A."/>
            <person name="Rajandream M.A."/>
            <person name="Rogers J."/>
            <person name="Rutter S."/>
            <person name="Seeger K."/>
            <person name="Skelton S."/>
            <person name="Squares S."/>
            <person name="Squares R."/>
            <person name="Sulston J.E."/>
            <person name="Taylor K."/>
            <person name="Whitehead S."/>
            <person name="Barrell B.G."/>
        </authorList>
    </citation>
    <scope>NUCLEOTIDE SEQUENCE [LARGE SCALE GENOMIC DNA]</scope>
    <source>
        <strain>ATCC 25618 / H37Rv</strain>
    </source>
</reference>
<reference key="2">
    <citation type="journal article" date="2005" name="J. Biol. Chem.">
        <title>The OtsAB pathway is essential for trehalose biosynthesis in Mycobacterium tuberculosis.</title>
        <authorList>
            <person name="Murphy H.N."/>
            <person name="Stewart G.R."/>
            <person name="Mischenko V.V."/>
            <person name="Apt A.S."/>
            <person name="Harris R."/>
            <person name="McAlister M.S.B."/>
            <person name="Driscoll P.C."/>
            <person name="Young D.B."/>
            <person name="Robertson B.D."/>
        </authorList>
    </citation>
    <scope>LACK OF FUNCTION AS A TREHALOSE-PHOSPHATE PHOSPHATASE</scope>
</reference>
<reference key="3">
    <citation type="journal article" date="2003" name="J. Exp. Med.">
        <title>Inhibition of respiration by nitric oxide induces a Mycobacterium tuberculosis dormancy program.</title>
        <authorList>
            <person name="Voskuil M.I."/>
            <person name="Schnappinger D."/>
            <person name="Visconti K.C."/>
            <person name="Harrell M.I."/>
            <person name="Dolganov G.M."/>
            <person name="Sherman D.R."/>
            <person name="Schoolnik G.K."/>
        </authorList>
    </citation>
    <scope>INDUCTION BY NITRIC OXIDE (NO) AND BY HYPOXIA</scope>
    <scope>DORMANCY REGULON</scope>
    <source>
        <strain>ATCC 25618 / H37Rv</strain>
    </source>
</reference>
<reference key="4">
    <citation type="journal article" date="2008" name="Cell Host Microbe">
        <title>Mycobacterium tuberculosis senses host-derived carbon monoxide during macrophage infection.</title>
        <authorList>
            <person name="Shiloh M.U."/>
            <person name="Manzanillo P."/>
            <person name="Cox J.S."/>
        </authorList>
    </citation>
    <scope>INDUCTION BY CARBON MONOXIDE (CO)</scope>
    <source>
        <strain>ATCC 35801 / TMC 107 / Erdman</strain>
    </source>
</reference>
<reference key="5">
    <citation type="journal article" date="2008" name="J. Biol. Chem.">
        <title>Heme oxygenase-1-derived carbon monoxide induces the Mycobacterium tuberculosis dormancy regulon.</title>
        <authorList>
            <person name="Kumar A."/>
            <person name="Deshane J.S."/>
            <person name="Crossman D.K."/>
            <person name="Bolisetty S."/>
            <person name="Yan B.S."/>
            <person name="Kramnik I."/>
            <person name="Agarwal A."/>
            <person name="Steyn A.J."/>
        </authorList>
    </citation>
    <scope>INDUCTION BY CARBON MONOXIDE (CO)</scope>
    <scope>DORMANCY REGULON</scope>
    <source>
        <strain>ATCC 25618 / H37Rv</strain>
    </source>
</reference>
<reference key="6">
    <citation type="journal article" date="2009" name="Clin. Vaccine Immunol.">
        <title>Immunogenicity of novel DosR regulon-encoded candidate antigens of Mycobacterium tuberculosis in three high-burden populations in Africa.</title>
        <authorList>
            <person name="Black G.F."/>
            <person name="Thiel B.A."/>
            <person name="Ota M.O."/>
            <person name="Parida S.K."/>
            <person name="Adegbola R."/>
            <person name="Boom W.H."/>
            <person name="Dockrell H.M."/>
            <person name="Franken K.L."/>
            <person name="Friggen A.H."/>
            <person name="Hill P.C."/>
            <person name="Klein M.R."/>
            <person name="Lalor M.K."/>
            <person name="Mayanja H."/>
            <person name="Schoolnik G."/>
            <person name="Stanley K."/>
            <person name="Weldingh K."/>
            <person name="Kaufmann S.H."/>
            <person name="Walzl G."/>
            <person name="Ottenhoff T.H."/>
        </authorList>
    </citation>
    <scope>BIOTECHNOLOGY</scope>
</reference>
<reference key="7">
    <citation type="journal article" date="2011" name="Mol. Cell. Proteomics">
        <title>Proteogenomic analysis of Mycobacterium tuberculosis by high resolution mass spectrometry.</title>
        <authorList>
            <person name="Kelkar D.S."/>
            <person name="Kumar D."/>
            <person name="Kumar P."/>
            <person name="Balakrishnan L."/>
            <person name="Muthusamy B."/>
            <person name="Yadav A.K."/>
            <person name="Shrivastava P."/>
            <person name="Marimuthu A."/>
            <person name="Anand S."/>
            <person name="Sundaram H."/>
            <person name="Kingsbury R."/>
            <person name="Harsha H.C."/>
            <person name="Nair B."/>
            <person name="Prasad T.S."/>
            <person name="Chauhan D.S."/>
            <person name="Katoch K."/>
            <person name="Katoch V.M."/>
            <person name="Kumar P."/>
            <person name="Chaerkady R."/>
            <person name="Ramachandran S."/>
            <person name="Dash D."/>
            <person name="Pandey A."/>
        </authorList>
    </citation>
    <scope>IDENTIFICATION BY MASS SPECTROMETRY [LARGE SCALE ANALYSIS]</scope>
    <source>
        <strain>ATCC 25618 / H37Rv</strain>
    </source>
</reference>
<proteinExistence type="evidence at protein level"/>
<evidence type="ECO:0000250" key="1">
    <source>
        <dbReference type="UniProtKB" id="D6XZ22"/>
    </source>
</evidence>
<evidence type="ECO:0000269" key="2">
    <source>
    </source>
</evidence>
<evidence type="ECO:0000269" key="3">
    <source>
    </source>
</evidence>
<evidence type="ECO:0000269" key="4">
    <source>
    </source>
</evidence>
<evidence type="ECO:0000269" key="5">
    <source>
    </source>
</evidence>
<evidence type="ECO:0000305" key="6"/>
<protein>
    <recommendedName>
        <fullName>Uncharacterized glycosyl hydrolase Rv2006</fullName>
        <ecNumber>3.2.1.-</ecNumber>
    </recommendedName>
</protein>
<feature type="chain" id="PRO_0000108019" description="Uncharacterized glycosyl hydrolase Rv2006">
    <location>
        <begin position="1"/>
        <end position="1327"/>
    </location>
</feature>
<feature type="active site" description="Proton donor" evidence="1">
    <location>
        <position position="1023"/>
    </location>
</feature>
<feature type="binding site" evidence="1">
    <location>
        <begin position="884"/>
        <end position="885"/>
    </location>
    <ligand>
        <name>substrate</name>
    </ligand>
</feature>
<feature type="binding site" evidence="1">
    <location>
        <begin position="1143"/>
        <end position="1144"/>
    </location>
    <ligand>
        <name>substrate</name>
    </ligand>
</feature>
<accession>P9WN15</accession>
<accession>L0T8I0</accession>
<accession>Q10850</accession>
<organism>
    <name type="scientific">Mycobacterium tuberculosis (strain ATCC 25618 / H37Rv)</name>
    <dbReference type="NCBI Taxonomy" id="83332"/>
    <lineage>
        <taxon>Bacteria</taxon>
        <taxon>Bacillati</taxon>
        <taxon>Actinomycetota</taxon>
        <taxon>Actinomycetes</taxon>
        <taxon>Mycobacteriales</taxon>
        <taxon>Mycobacteriaceae</taxon>
        <taxon>Mycobacterium</taxon>
        <taxon>Mycobacterium tuberculosis complex</taxon>
    </lineage>
</organism>
<keyword id="KW-0326">Glycosidase</keyword>
<keyword id="KW-0378">Hydrolase</keyword>
<keyword id="KW-1185">Reference proteome</keyword>
<name>Y2006_MYCTU</name>
<sequence>MRCGIVVNVTGPPPTIDRRYHDAVIVGLDNVVDKATRVHAAAWTKFLDDYLTRRPQRTGEDHCPLTHDDYRRFLAGKPDGVADFLAARGIRLPPGSPTDLTDDTVYGLQNLERQTFLQLLNTGVPEGKSIASFARRLQVAGVRVAAHTSHRNYGHTLDATGLAEVFAVFVDGAVTAELGLPAEPNPAGLIETAKRLGANPGRCVVIDSCQTGLRAGRNGGFALVIAVDAHGDAENLLSSGADAVVADLAAVTVGSGDAAISTIPDALQVYSQLKRLLTGRRPAVFLDFDGTLSDIVERPEAATLVDGAAEALRALAAQCPVAVISGRDLADVRNRVKVDGLWLAGSHGFELVAPDGSHHQNAAATAAIDGLAEAAAQLADALREIAGAVVEHKRFAVAVHYRNVADDSVDNLIAAVRRLGHAAGLRVTTGRKVVELRPDIAWDKGKALDWIGERLGPAEVGPDLRLPIYIGDDLTDEDAFDAVRFTGVGIVVRHNEHGDRRSAATFRLECPYTVCQFLSQLACDLQEAVQHDDPWTLVFHGYDPGQERLREALCAVGNGYLGSRGCAPESAESEAHYPGTYVAGVYNQLTDHIEGCTVDNESLVNLPNWLSLTFRIDGGAWFNVDTVELLSYRQTFDLRRATLTRSLRFRDAGGRVTTMTQERFASMNRPNLVALQTRIESENWSGTVDFRSLVDGGVHNTLVDRYRQLSSQHLTTAEIEVLADSVLLRTQTSQSGIAIAVAARSTLWRDGQRVDAQYRVARDTNRGGHDIQVTLSAGQSVTLEKVATIFTSRDAATLTAAISAQRCLGEAGRYAELCQQHVRAWARLWERCAIDLTGNTEELRLVRLHLLHLLQTISPHTAELDAGVPARGLNGEAYRGHVFWDALFVAPVLSLRMPKVARSLLDYRYRRLPAARRAAHRAGHLGAMYPWQSGSDGSEVSQQLHLNPRSGRWTPDPSDRAHHVGLAVAYNAWHYYQVTGDRQYLVDCGAELLVEIARFWVGLAKLDDSRGRYLIRGVIGPDEFHSGYPGNEYDGIDNNAYTNVMAVWVILRAMEALDLLPLTDRRHLIEKLGLTTQERDQWDDVSRRMFVPFHDGVISQFEGYSELAELDWDHYRHRYGNIQRLDRILEAEGDSVNNYQASKQADALMLLYLLSSDELIGLLARLGYRFAPTQIPGTVDYYLARTSDGSTLSAVVHAWVLARANRSNAMEYFRQVLRSDIADVQGGTTQEGIHLAAMAGSIDLLQRCYSGLELRDDRLVLSPQWPEALGPLEFPFVYRRHQLSLRISGRSATLTAESGDAEPIEVECRGHVQRLRCGHTIEVGCSR</sequence>
<comment type="induction">
    <text evidence="2 3 4">A member of the dormancy regulon. Induced in response to reduced oxygen tension (hypoxia), low levels of nitric oxide (NO) and carbon monoxide (CO). It is hoped that this regulon will give insight into the latent, or dormant phase of infection.</text>
</comment>
<comment type="biotechnology">
    <text evidence="5">This protein serves as an immunogenic antigen, inducing gamma-interferon responses in whole-blood cultures from M.tuberculosis-exposed adults in Uganda, The Gambia and South Africa, indicating this might be a good vaccine candidate.</text>
</comment>
<comment type="similarity">
    <text evidence="6">In the N-terminal section; belongs to the trehalose phosphatase family.</text>
</comment>
<comment type="similarity">
    <text evidence="6">In the C-terminal section; belongs to the glycosyl hydrolase 65 family.</text>
</comment>
<comment type="caution">
    <text evidence="6">Despite its similarity with the trehalose-phosphate phosphatase enzymes, it does not display trehalose-phosphate phosphatase activity.</text>
</comment>
<gene>
    <name type="ordered locus">Rv2006</name>
    <name type="ORF">MTCY39.11c</name>
</gene>
<dbReference type="EC" id="3.2.1.-"/>
<dbReference type="EMBL" id="AL123456">
    <property type="protein sequence ID" value="CCP44778.1"/>
    <property type="molecule type" value="Genomic_DNA"/>
</dbReference>
<dbReference type="PIR" id="D70759">
    <property type="entry name" value="D70759"/>
</dbReference>
<dbReference type="SMR" id="P9WN15"/>
<dbReference type="FunCoup" id="P9WN15">
    <property type="interactions" value="23"/>
</dbReference>
<dbReference type="STRING" id="83332.Rv2006"/>
<dbReference type="PaxDb" id="83332-Rv2006"/>
<dbReference type="KEGG" id="mtu:Rv2006"/>
<dbReference type="KEGG" id="mtv:RVBD_2006"/>
<dbReference type="TubercuList" id="Rv2006"/>
<dbReference type="eggNOG" id="COG0561">
    <property type="taxonomic scope" value="Bacteria"/>
</dbReference>
<dbReference type="eggNOG" id="COG0637">
    <property type="taxonomic scope" value="Bacteria"/>
</dbReference>
<dbReference type="eggNOG" id="COG1554">
    <property type="taxonomic scope" value="Bacteria"/>
</dbReference>
<dbReference type="InParanoid" id="P9WN15"/>
<dbReference type="OrthoDB" id="9816160at2"/>
<dbReference type="PhylomeDB" id="P9WN15"/>
<dbReference type="BioCyc" id="MetaCyc:G185E-6208-MONOMER"/>
<dbReference type="Proteomes" id="UP000001584">
    <property type="component" value="Chromosome"/>
</dbReference>
<dbReference type="GO" id="GO:0005576">
    <property type="term" value="C:extracellular region"/>
    <property type="evidence" value="ECO:0007005"/>
    <property type="project" value="MTBBASE"/>
</dbReference>
<dbReference type="GO" id="GO:0009274">
    <property type="term" value="C:peptidoglycan-based cell wall"/>
    <property type="evidence" value="ECO:0007005"/>
    <property type="project" value="MTBBASE"/>
</dbReference>
<dbReference type="GO" id="GO:0005886">
    <property type="term" value="C:plasma membrane"/>
    <property type="evidence" value="ECO:0007005"/>
    <property type="project" value="MTBBASE"/>
</dbReference>
<dbReference type="GO" id="GO:0030246">
    <property type="term" value="F:carbohydrate binding"/>
    <property type="evidence" value="ECO:0007669"/>
    <property type="project" value="InterPro"/>
</dbReference>
<dbReference type="GO" id="GO:0016757">
    <property type="term" value="F:glycosyltransferase activity"/>
    <property type="evidence" value="ECO:0007669"/>
    <property type="project" value="UniProtKB-ARBA"/>
</dbReference>
<dbReference type="GO" id="GO:0004553">
    <property type="term" value="F:hydrolase activity, hydrolyzing O-glycosyl compounds"/>
    <property type="evidence" value="ECO:0000318"/>
    <property type="project" value="GO_Central"/>
</dbReference>
<dbReference type="GO" id="GO:0016791">
    <property type="term" value="F:phosphatase activity"/>
    <property type="evidence" value="ECO:0007669"/>
    <property type="project" value="UniProtKB-ARBA"/>
</dbReference>
<dbReference type="GO" id="GO:0005975">
    <property type="term" value="P:carbohydrate metabolic process"/>
    <property type="evidence" value="ECO:0000318"/>
    <property type="project" value="GO_Central"/>
</dbReference>
<dbReference type="GO" id="GO:0005992">
    <property type="term" value="P:trehalose biosynthetic process"/>
    <property type="evidence" value="ECO:0007669"/>
    <property type="project" value="InterPro"/>
</dbReference>
<dbReference type="CDD" id="cd01627">
    <property type="entry name" value="HAD_TPP"/>
    <property type="match status" value="1"/>
</dbReference>
<dbReference type="FunFam" id="1.50.10.10:FF:000053">
    <property type="entry name" value="Putative glycosyl hydrolase"/>
    <property type="match status" value="1"/>
</dbReference>
<dbReference type="FunFam" id="3.30.70.1020:FF:000007">
    <property type="entry name" value="Trehalose 6-phosphate phosphatase"/>
    <property type="match status" value="1"/>
</dbReference>
<dbReference type="FunFam" id="3.40.50.1000:FF:000310">
    <property type="entry name" value="Trehalose-6-phosphate phosphatase OtsB"/>
    <property type="match status" value="1"/>
</dbReference>
<dbReference type="Gene3D" id="1.50.10.10">
    <property type="match status" value="1"/>
</dbReference>
<dbReference type="Gene3D" id="2.70.98.40">
    <property type="entry name" value="Glycoside hydrolase, family 65, N-terminal domain"/>
    <property type="match status" value="1"/>
</dbReference>
<dbReference type="Gene3D" id="3.40.50.1000">
    <property type="entry name" value="HAD superfamily/HAD-like"/>
    <property type="match status" value="2"/>
</dbReference>
<dbReference type="Gene3D" id="2.60.420.10">
    <property type="entry name" value="Maltose phosphorylase, domain 3"/>
    <property type="match status" value="1"/>
</dbReference>
<dbReference type="Gene3D" id="1.10.150.240">
    <property type="entry name" value="Putative phosphatase, domain 2"/>
    <property type="match status" value="1"/>
</dbReference>
<dbReference type="Gene3D" id="3.30.70.1020">
    <property type="entry name" value="Trehalose-6-phosphate phosphatase related protein, domain 2"/>
    <property type="match status" value="1"/>
</dbReference>
<dbReference type="InterPro" id="IPR008928">
    <property type="entry name" value="6-hairpin_glycosidase_sf"/>
</dbReference>
<dbReference type="InterPro" id="IPR012341">
    <property type="entry name" value="6hp_glycosidase-like_sf"/>
</dbReference>
<dbReference type="InterPro" id="IPR011013">
    <property type="entry name" value="Gal_mutarotase_sf_dom"/>
</dbReference>
<dbReference type="InterPro" id="IPR005194">
    <property type="entry name" value="Glyco_hydro_65_C"/>
</dbReference>
<dbReference type="InterPro" id="IPR005195">
    <property type="entry name" value="Glyco_hydro_65_M"/>
</dbReference>
<dbReference type="InterPro" id="IPR005196">
    <property type="entry name" value="Glyco_hydro_65_N"/>
</dbReference>
<dbReference type="InterPro" id="IPR037018">
    <property type="entry name" value="Glyco_hydro_65_N_sf"/>
</dbReference>
<dbReference type="InterPro" id="IPR036412">
    <property type="entry name" value="HAD-like_sf"/>
</dbReference>
<dbReference type="InterPro" id="IPR006379">
    <property type="entry name" value="HAD-SF_hydro_IIB"/>
</dbReference>
<dbReference type="InterPro" id="IPR023214">
    <property type="entry name" value="HAD_sf"/>
</dbReference>
<dbReference type="InterPro" id="IPR023198">
    <property type="entry name" value="PGP-like_dom2"/>
</dbReference>
<dbReference type="InterPro" id="IPR003337">
    <property type="entry name" value="Trehalose_PPase"/>
</dbReference>
<dbReference type="NCBIfam" id="TIGR01484">
    <property type="entry name" value="HAD-SF-IIB"/>
    <property type="match status" value="1"/>
</dbReference>
<dbReference type="NCBIfam" id="TIGR00685">
    <property type="entry name" value="T6PP"/>
    <property type="match status" value="1"/>
</dbReference>
<dbReference type="PANTHER" id="PTHR11051">
    <property type="entry name" value="GLYCOSYL HYDROLASE-RELATED"/>
    <property type="match status" value="1"/>
</dbReference>
<dbReference type="PANTHER" id="PTHR11051:SF8">
    <property type="entry name" value="PROTEIN-GLUCOSYLGALACTOSYLHYDROXYLYSINE GLUCOSIDASE"/>
    <property type="match status" value="1"/>
</dbReference>
<dbReference type="Pfam" id="PF03633">
    <property type="entry name" value="Glyco_hydro_65C"/>
    <property type="match status" value="1"/>
</dbReference>
<dbReference type="Pfam" id="PF03632">
    <property type="entry name" value="Glyco_hydro_65m"/>
    <property type="match status" value="1"/>
</dbReference>
<dbReference type="Pfam" id="PF03636">
    <property type="entry name" value="Glyco_hydro_65N"/>
    <property type="match status" value="1"/>
</dbReference>
<dbReference type="Pfam" id="PF00702">
    <property type="entry name" value="Hydrolase"/>
    <property type="match status" value="1"/>
</dbReference>
<dbReference type="Pfam" id="PF02358">
    <property type="entry name" value="Trehalose_PPase"/>
    <property type="match status" value="1"/>
</dbReference>
<dbReference type="SUPFAM" id="SSF74650">
    <property type="entry name" value="Galactose mutarotase-like"/>
    <property type="match status" value="1"/>
</dbReference>
<dbReference type="SUPFAM" id="SSF56784">
    <property type="entry name" value="HAD-like"/>
    <property type="match status" value="2"/>
</dbReference>
<dbReference type="SUPFAM" id="SSF48208">
    <property type="entry name" value="Six-hairpin glycosidases"/>
    <property type="match status" value="1"/>
</dbReference>